<keyword id="KW-1015">Disulfide bond</keyword>
<keyword id="KW-1168">Fusion of virus membrane with host membrane</keyword>
<keyword id="KW-0426">Late protein</keyword>
<keyword id="KW-0472">Membrane</keyword>
<keyword id="KW-0597">Phosphoprotein</keyword>
<keyword id="KW-0735">Signal-anchor</keyword>
<keyword id="KW-0812">Transmembrane</keyword>
<keyword id="KW-1133">Transmembrane helix</keyword>
<keyword id="KW-0261">Viral envelope protein</keyword>
<keyword id="KW-1162">Viral penetration into host cytoplasm</keyword>
<keyword id="KW-0946">Virion</keyword>
<keyword id="KW-1160">Virus entry into host cell</keyword>
<evidence type="ECO:0000250" key="1">
    <source>
        <dbReference type="UniProtKB" id="P68633"/>
    </source>
</evidence>
<evidence type="ECO:0000255" key="2"/>
<evidence type="ECO:0000305" key="3"/>
<organism>
    <name type="scientific">Ectromelia virus (strain Moscow)</name>
    <name type="common">ECTV</name>
    <name type="synonym">Mousepox virus</name>
    <dbReference type="NCBI Taxonomy" id="265874"/>
    <lineage>
        <taxon>Viruses</taxon>
        <taxon>Varidnaviria</taxon>
        <taxon>Bamfordvirae</taxon>
        <taxon>Nucleocytoviricota</taxon>
        <taxon>Pokkesviricetes</taxon>
        <taxon>Chitovirales</taxon>
        <taxon>Poxviridae</taxon>
        <taxon>Chordopoxvirinae</taxon>
        <taxon>Orthopoxvirus</taxon>
        <taxon>Ectromelia virus</taxon>
    </lineage>
</organism>
<reference key="1">
    <citation type="journal article" date="2003" name="Virology">
        <title>The genomic sequence of Ectromelia virus, the causative agent of mousepox.</title>
        <authorList>
            <person name="Chen N."/>
            <person name="Danila M.I."/>
            <person name="Feng Z."/>
            <person name="Buller R.M."/>
            <person name="Wang C."/>
            <person name="Han X."/>
            <person name="Lefkowitz E.J."/>
            <person name="Upton C."/>
        </authorList>
    </citation>
    <scope>NUCLEOTIDE SEQUENCE [LARGE SCALE GENOMIC DNA]</scope>
</reference>
<protein>
    <recommendedName>
        <fullName>Envelope protein OPG155</fullName>
    </recommendedName>
    <alternativeName>
        <fullName>Protein EVM130</fullName>
    </alternativeName>
</protein>
<gene>
    <name type="primary">OPG155</name>
    <name type="ordered locus">EVM130</name>
</gene>
<proteinExistence type="inferred from homology"/>
<comment type="function">
    <text evidence="1">Envelope protein required for virus entry into host cell and for cell-cell fusion (syncytium formation).</text>
</comment>
<comment type="subunit">
    <text evidence="1">Part of a stable entry-fusion complex (EFC) which is at least composed of proteins OPG143, OPG147, OPG155, OPG086, OPG094, OPG107, OPG104, and OPG099. Formation of the viral membrane is necessary for the assembly of the complex. Interacts directly with protein OPG107.</text>
</comment>
<comment type="subcellular location">
    <subcellularLocation>
        <location evidence="1">Virion membrane</location>
        <topology evidence="1">Single-pass type III membrane protein</topology>
    </subcellularLocation>
    <text evidence="1">Component of the mature virion (MV) membrane.</text>
</comment>
<comment type="PTM">
    <text evidence="1">Contains two intramolecular disulfide bonds. They are created by the viral disulfide bond formation pathway, a poxvirus-specific pathway that operates on the cytoplasmic side of the MV membranes.</text>
</comment>
<comment type="similarity">
    <text evidence="3">Belongs to the orthopoxvirus OPG155 protein family.</text>
</comment>
<accession>Q8JL88</accession>
<name>PG155_ECTVM</name>
<feature type="chain" id="PRO_0000099290" description="Envelope protein OPG155">
    <location>
        <begin position="1"/>
        <end position="146"/>
    </location>
</feature>
<feature type="transmembrane region" description="Helical; Signal-anchor for type II membrane protein" evidence="2">
    <location>
        <begin position="1"/>
        <end position="21"/>
    </location>
</feature>
<feature type="topological domain" description="Virion surface" evidence="2">
    <location>
        <begin position="22"/>
        <end position="146"/>
    </location>
</feature>
<sequence length="146" mass="16348">MNSLSIFFIVVATAAVCLLFIQGYSIYENYGNIKEFNATHAAFEYSKSIGGTPALDRRVQDVNDTISDVKQKWRCVVYPGNGFVSASIFGFQTEVGLNNTRSIRKFNTMQQCIDFTFSDVINIDIYNPCVAPNINNAECQFLKSVL</sequence>
<organismHost>
    <name type="scientific">Mus musculus</name>
    <name type="common">Mouse</name>
    <dbReference type="NCBI Taxonomy" id="10090"/>
</organismHost>
<dbReference type="EMBL" id="AF012825">
    <property type="protein sequence ID" value="AAM92435.1"/>
    <property type="molecule type" value="Genomic_DNA"/>
</dbReference>
<dbReference type="RefSeq" id="NP_671649.1">
    <property type="nucleotide sequence ID" value="NC_004105.1"/>
</dbReference>
<dbReference type="SMR" id="Q8JL88"/>
<dbReference type="GeneID" id="951568"/>
<dbReference type="KEGG" id="vg:951568"/>
<dbReference type="Proteomes" id="UP000172110">
    <property type="component" value="Segment"/>
</dbReference>
<dbReference type="GO" id="GO:0016020">
    <property type="term" value="C:membrane"/>
    <property type="evidence" value="ECO:0007669"/>
    <property type="project" value="UniProtKB-KW"/>
</dbReference>
<dbReference type="GO" id="GO:0019031">
    <property type="term" value="C:viral envelope"/>
    <property type="evidence" value="ECO:0007669"/>
    <property type="project" value="UniProtKB-KW"/>
</dbReference>
<dbReference type="GO" id="GO:0055036">
    <property type="term" value="C:virion membrane"/>
    <property type="evidence" value="ECO:0007669"/>
    <property type="project" value="UniProtKB-SubCell"/>
</dbReference>
<dbReference type="GO" id="GO:0039663">
    <property type="term" value="P:membrane fusion involved in viral entry into host cell"/>
    <property type="evidence" value="ECO:0007669"/>
    <property type="project" value="UniProtKB-KW"/>
</dbReference>
<dbReference type="GO" id="GO:0046718">
    <property type="term" value="P:symbiont entry into host cell"/>
    <property type="evidence" value="ECO:0007669"/>
    <property type="project" value="UniProtKB-KW"/>
</dbReference>
<dbReference type="InterPro" id="IPR007664">
    <property type="entry name" value="Poxvirus_A28"/>
</dbReference>
<dbReference type="Pfam" id="PF04584">
    <property type="entry name" value="Pox_A28"/>
    <property type="match status" value="1"/>
</dbReference>